<sequence length="409" mass="46667">MSSHPIQVFSEIGKLKKVMLHRPGKELENLLPDYLERLLFDDIPFLEDAQKEHDAFAQALRDEGIEVLYLEQLAAESLTSPEIRDQFIEEYLDEANIRDRQTKVAIRELLHGIKDNQELVEKTMAGIQKVELPEIPDEAKDLTDLVESEYPFAIDPMPNLYFTRDPFATIGNAVSLNHMFADTRNRETLYGKYIFKYHPIYGGKVDLVYNREEDTRIEGGDELVLSKDVLAVGISQRTDAASIEKLLVNIFKKNVGFKKVLAFEFANNRKFMHLDTVFTMVDYDKFTIHPEIEGDLHVYSVTYENEKLKIVEEKGDLAELLAQNLGVEKVHLIRCGGGNIVAAAREQWNDGSNTLTIAPGVVVVYDRNTVTNKILEEYGLRLIKIRGSELVRGRGGPRCMSMPFEREEV</sequence>
<name>ARCA_STRZP</name>
<keyword id="KW-0056">Arginine metabolism</keyword>
<keyword id="KW-0963">Cytoplasm</keyword>
<keyword id="KW-0378">Hydrolase</keyword>
<evidence type="ECO:0000255" key="1">
    <source>
        <dbReference type="HAMAP-Rule" id="MF_00242"/>
    </source>
</evidence>
<comment type="catalytic activity">
    <reaction evidence="1">
        <text>L-arginine + H2O = L-citrulline + NH4(+)</text>
        <dbReference type="Rhea" id="RHEA:19597"/>
        <dbReference type="ChEBI" id="CHEBI:15377"/>
        <dbReference type="ChEBI" id="CHEBI:28938"/>
        <dbReference type="ChEBI" id="CHEBI:32682"/>
        <dbReference type="ChEBI" id="CHEBI:57743"/>
        <dbReference type="EC" id="3.5.3.6"/>
    </reaction>
</comment>
<comment type="pathway">
    <text evidence="1">Amino-acid degradation; L-arginine degradation via ADI pathway; carbamoyl phosphate from L-arginine: step 1/2.</text>
</comment>
<comment type="subcellular location">
    <subcellularLocation>
        <location evidence="1">Cytoplasm</location>
    </subcellularLocation>
</comment>
<comment type="similarity">
    <text evidence="1">Belongs to the arginine deiminase family.</text>
</comment>
<organism>
    <name type="scientific">Streptococcus pneumoniae (strain P1031)</name>
    <dbReference type="NCBI Taxonomy" id="488223"/>
    <lineage>
        <taxon>Bacteria</taxon>
        <taxon>Bacillati</taxon>
        <taxon>Bacillota</taxon>
        <taxon>Bacilli</taxon>
        <taxon>Lactobacillales</taxon>
        <taxon>Streptococcaceae</taxon>
        <taxon>Streptococcus</taxon>
    </lineage>
</organism>
<protein>
    <recommendedName>
        <fullName evidence="1">Arginine deiminase</fullName>
        <shortName evidence="1">ADI</shortName>
        <ecNumber evidence="1">3.5.3.6</ecNumber>
    </recommendedName>
    <alternativeName>
        <fullName evidence="1">Arginine dihydrolase</fullName>
        <shortName evidence="1">AD</shortName>
    </alternativeName>
</protein>
<gene>
    <name evidence="1" type="primary">arcA</name>
    <name type="ordered locus">SPP_2199</name>
</gene>
<feature type="chain" id="PRO_1000125327" description="Arginine deiminase">
    <location>
        <begin position="1"/>
        <end position="409"/>
    </location>
</feature>
<feature type="active site" description="Amidino-cysteine intermediate" evidence="1">
    <location>
        <position position="399"/>
    </location>
</feature>
<proteinExistence type="inferred from homology"/>
<dbReference type="EC" id="3.5.3.6" evidence="1"/>
<dbReference type="EMBL" id="CP000920">
    <property type="protein sequence ID" value="ACO20541.1"/>
    <property type="molecule type" value="Genomic_DNA"/>
</dbReference>
<dbReference type="RefSeq" id="WP_000094620.1">
    <property type="nucleotide sequence ID" value="NC_012467.1"/>
</dbReference>
<dbReference type="SMR" id="C1CNC2"/>
<dbReference type="KEGG" id="spp:SPP_2199"/>
<dbReference type="HOGENOM" id="CLU_052662_0_1_9"/>
<dbReference type="UniPathway" id="UPA00254">
    <property type="reaction ID" value="UER00364"/>
</dbReference>
<dbReference type="GO" id="GO:0005737">
    <property type="term" value="C:cytoplasm"/>
    <property type="evidence" value="ECO:0007669"/>
    <property type="project" value="UniProtKB-SubCell"/>
</dbReference>
<dbReference type="GO" id="GO:0016990">
    <property type="term" value="F:arginine deiminase activity"/>
    <property type="evidence" value="ECO:0007669"/>
    <property type="project" value="UniProtKB-UniRule"/>
</dbReference>
<dbReference type="GO" id="GO:0019547">
    <property type="term" value="P:arginine catabolic process to ornithine"/>
    <property type="evidence" value="ECO:0007669"/>
    <property type="project" value="UniProtKB-UniRule"/>
</dbReference>
<dbReference type="GO" id="GO:0019546">
    <property type="term" value="P:arginine deiminase pathway"/>
    <property type="evidence" value="ECO:0007669"/>
    <property type="project" value="TreeGrafter"/>
</dbReference>
<dbReference type="FunFam" id="1.10.3930.10:FF:000003">
    <property type="entry name" value="Arginine deiminase"/>
    <property type="match status" value="1"/>
</dbReference>
<dbReference type="Gene3D" id="1.10.3930.10">
    <property type="entry name" value="Arginine deiminase"/>
    <property type="match status" value="1"/>
</dbReference>
<dbReference type="Gene3D" id="3.75.10.10">
    <property type="entry name" value="L-arginine/glycine Amidinotransferase, Chain A"/>
    <property type="match status" value="1"/>
</dbReference>
<dbReference type="HAMAP" id="MF_00242">
    <property type="entry name" value="Arg_deiminase"/>
    <property type="match status" value="1"/>
</dbReference>
<dbReference type="InterPro" id="IPR003876">
    <property type="entry name" value="Arg_deiminase"/>
</dbReference>
<dbReference type="NCBIfam" id="TIGR01078">
    <property type="entry name" value="arcA"/>
    <property type="match status" value="1"/>
</dbReference>
<dbReference type="NCBIfam" id="NF002381">
    <property type="entry name" value="PRK01388.1"/>
    <property type="match status" value="1"/>
</dbReference>
<dbReference type="PANTHER" id="PTHR47271">
    <property type="entry name" value="ARGININE DEIMINASE"/>
    <property type="match status" value="1"/>
</dbReference>
<dbReference type="PANTHER" id="PTHR47271:SF2">
    <property type="entry name" value="ARGININE DEIMINASE"/>
    <property type="match status" value="1"/>
</dbReference>
<dbReference type="Pfam" id="PF02274">
    <property type="entry name" value="ADI"/>
    <property type="match status" value="1"/>
</dbReference>
<dbReference type="PIRSF" id="PIRSF006356">
    <property type="entry name" value="Arg_deiminase"/>
    <property type="match status" value="1"/>
</dbReference>
<dbReference type="PRINTS" id="PR01466">
    <property type="entry name" value="ARGDEIMINASE"/>
</dbReference>
<dbReference type="SUPFAM" id="SSF55909">
    <property type="entry name" value="Pentein"/>
    <property type="match status" value="1"/>
</dbReference>
<accession>C1CNC2</accession>
<reference key="1">
    <citation type="journal article" date="2010" name="Genome Biol.">
        <title>Structure and dynamics of the pan-genome of Streptococcus pneumoniae and closely related species.</title>
        <authorList>
            <person name="Donati C."/>
            <person name="Hiller N.L."/>
            <person name="Tettelin H."/>
            <person name="Muzzi A."/>
            <person name="Croucher N.J."/>
            <person name="Angiuoli S.V."/>
            <person name="Oggioni M."/>
            <person name="Dunning Hotopp J.C."/>
            <person name="Hu F.Z."/>
            <person name="Riley D.R."/>
            <person name="Covacci A."/>
            <person name="Mitchell T.J."/>
            <person name="Bentley S.D."/>
            <person name="Kilian M."/>
            <person name="Ehrlich G.D."/>
            <person name="Rappuoli R."/>
            <person name="Moxon E.R."/>
            <person name="Masignani V."/>
        </authorList>
    </citation>
    <scope>NUCLEOTIDE SEQUENCE [LARGE SCALE GENOMIC DNA]</scope>
    <source>
        <strain>P1031</strain>
    </source>
</reference>